<accession>Q69ZT9</accession>
<accession>B9EHP9</accession>
<accession>Q6AXF5</accession>
<accession>Q6PCX1</accession>
<accession>Q8C8T3</accession>
<protein>
    <recommendedName>
        <fullName>TBC1 domain family member 30</fullName>
    </recommendedName>
</protein>
<dbReference type="EMBL" id="AK173079">
    <property type="protein sequence ID" value="BAD32357.1"/>
    <property type="status" value="ALT_INIT"/>
    <property type="molecule type" value="mRNA"/>
</dbReference>
<dbReference type="EMBL" id="AK044521">
    <property type="protein sequence ID" value="BAC31963.1"/>
    <property type="molecule type" value="mRNA"/>
</dbReference>
<dbReference type="EMBL" id="BC059081">
    <property type="protein sequence ID" value="AAH59081.1"/>
    <property type="molecule type" value="mRNA"/>
</dbReference>
<dbReference type="EMBL" id="BC079587">
    <property type="protein sequence ID" value="AAH79587.1"/>
    <property type="status" value="ALT_FRAME"/>
    <property type="molecule type" value="mRNA"/>
</dbReference>
<dbReference type="EMBL" id="BC138285">
    <property type="protein sequence ID" value="AAI38286.1"/>
    <property type="molecule type" value="mRNA"/>
</dbReference>
<dbReference type="EMBL" id="BC138286">
    <property type="protein sequence ID" value="AAI38287.1"/>
    <property type="molecule type" value="mRNA"/>
</dbReference>
<dbReference type="CCDS" id="CCDS48704.1"/>
<dbReference type="RefSeq" id="NP_083333.1">
    <property type="nucleotide sequence ID" value="NM_029057.2"/>
</dbReference>
<dbReference type="SMR" id="Q69ZT9"/>
<dbReference type="FunCoup" id="Q69ZT9">
    <property type="interactions" value="298"/>
</dbReference>
<dbReference type="IntAct" id="Q69ZT9">
    <property type="interactions" value="1"/>
</dbReference>
<dbReference type="STRING" id="10090.ENSMUSP00000070488"/>
<dbReference type="iPTMnet" id="Q69ZT9"/>
<dbReference type="PhosphoSitePlus" id="Q69ZT9"/>
<dbReference type="PaxDb" id="10090-ENSMUSP00000070488"/>
<dbReference type="ProteomicsDB" id="263132"/>
<dbReference type="Ensembl" id="ENSMUST00000064107.7">
    <property type="protein sequence ID" value="ENSMUSP00000070488.6"/>
    <property type="gene ID" value="ENSMUSG00000052302.7"/>
</dbReference>
<dbReference type="GeneID" id="74694"/>
<dbReference type="KEGG" id="mmu:74694"/>
<dbReference type="UCSC" id="uc007hfl.2">
    <property type="organism name" value="mouse"/>
</dbReference>
<dbReference type="AGR" id="MGI:1921944"/>
<dbReference type="CTD" id="23329"/>
<dbReference type="MGI" id="MGI:1921944">
    <property type="gene designation" value="Tbc1d30"/>
</dbReference>
<dbReference type="VEuPathDB" id="HostDB:ENSMUSG00000052302"/>
<dbReference type="eggNOG" id="KOG2058">
    <property type="taxonomic scope" value="Eukaryota"/>
</dbReference>
<dbReference type="GeneTree" id="ENSGT00940000159226"/>
<dbReference type="HOGENOM" id="CLU_012937_1_1_1"/>
<dbReference type="InParanoid" id="Q69ZT9"/>
<dbReference type="OMA" id="CKTNNLG"/>
<dbReference type="OrthoDB" id="289721at2759"/>
<dbReference type="PhylomeDB" id="Q69ZT9"/>
<dbReference type="TreeFam" id="TF321898"/>
<dbReference type="BioGRID-ORCS" id="74694">
    <property type="hits" value="0 hits in 75 CRISPR screens"/>
</dbReference>
<dbReference type="ChiTaRS" id="Tbc1d30">
    <property type="organism name" value="mouse"/>
</dbReference>
<dbReference type="PRO" id="PR:Q69ZT9"/>
<dbReference type="Proteomes" id="UP000000589">
    <property type="component" value="Chromosome 10"/>
</dbReference>
<dbReference type="RNAct" id="Q69ZT9">
    <property type="molecule type" value="protein"/>
</dbReference>
<dbReference type="Bgee" id="ENSMUSG00000052302">
    <property type="expression patterns" value="Expressed in retrosplenial region and 125 other cell types or tissues"/>
</dbReference>
<dbReference type="ExpressionAtlas" id="Q69ZT9">
    <property type="expression patterns" value="baseline and differential"/>
</dbReference>
<dbReference type="GO" id="GO:0036064">
    <property type="term" value="C:ciliary basal body"/>
    <property type="evidence" value="ECO:0007669"/>
    <property type="project" value="Ensembl"/>
</dbReference>
<dbReference type="GO" id="GO:0005829">
    <property type="term" value="C:cytosol"/>
    <property type="evidence" value="ECO:0007669"/>
    <property type="project" value="Ensembl"/>
</dbReference>
<dbReference type="GO" id="GO:0016604">
    <property type="term" value="C:nuclear body"/>
    <property type="evidence" value="ECO:0007669"/>
    <property type="project" value="Ensembl"/>
</dbReference>
<dbReference type="GO" id="GO:0005886">
    <property type="term" value="C:plasma membrane"/>
    <property type="evidence" value="ECO:0007669"/>
    <property type="project" value="UniProtKB-SubCell"/>
</dbReference>
<dbReference type="GO" id="GO:0005096">
    <property type="term" value="F:GTPase activator activity"/>
    <property type="evidence" value="ECO:0007669"/>
    <property type="project" value="Ensembl"/>
</dbReference>
<dbReference type="GO" id="GO:0031267">
    <property type="term" value="F:small GTPase binding"/>
    <property type="evidence" value="ECO:0007669"/>
    <property type="project" value="Ensembl"/>
</dbReference>
<dbReference type="GO" id="GO:1902018">
    <property type="term" value="P:negative regulation of cilium assembly"/>
    <property type="evidence" value="ECO:0007669"/>
    <property type="project" value="Ensembl"/>
</dbReference>
<dbReference type="FunFam" id="1.10.472.80:FF:000011">
    <property type="entry name" value="TBC1 domain family member 30"/>
    <property type="match status" value="1"/>
</dbReference>
<dbReference type="FunFam" id="1.10.8.270:FF:000009">
    <property type="entry name" value="TBC1 domain family member 30"/>
    <property type="match status" value="1"/>
</dbReference>
<dbReference type="Gene3D" id="1.10.8.270">
    <property type="entry name" value="putative rabgap domain of human tbc1 domain family member 14 like domains"/>
    <property type="match status" value="1"/>
</dbReference>
<dbReference type="Gene3D" id="1.10.472.80">
    <property type="entry name" value="Ypt/Rab-GAP domain of gyp1p, domain 3"/>
    <property type="match status" value="1"/>
</dbReference>
<dbReference type="InterPro" id="IPR000195">
    <property type="entry name" value="Rab-GAP-TBC_dom"/>
</dbReference>
<dbReference type="InterPro" id="IPR035969">
    <property type="entry name" value="Rab-GAP_TBC_sf"/>
</dbReference>
<dbReference type="InterPro" id="IPR032738">
    <property type="entry name" value="Tbc1d30_C"/>
</dbReference>
<dbReference type="PANTHER" id="PTHR13399:SF4">
    <property type="entry name" value="TBC1 DOMAIN FAMILY MEMBER 30"/>
    <property type="match status" value="1"/>
</dbReference>
<dbReference type="PANTHER" id="PTHR13399">
    <property type="entry name" value="TRANSLOCON-ASSOCIATED PROTEIN TRAP , GAMMA SUBUNIT"/>
    <property type="match status" value="1"/>
</dbReference>
<dbReference type="Pfam" id="PF15733">
    <property type="entry name" value="DUF4682"/>
    <property type="match status" value="1"/>
</dbReference>
<dbReference type="Pfam" id="PF00566">
    <property type="entry name" value="RabGAP-TBC"/>
    <property type="match status" value="1"/>
</dbReference>
<dbReference type="SMART" id="SM00164">
    <property type="entry name" value="TBC"/>
    <property type="match status" value="1"/>
</dbReference>
<dbReference type="SUPFAM" id="SSF47923">
    <property type="entry name" value="Ypt/Rab-GAP domain of gyp1p"/>
    <property type="match status" value="2"/>
</dbReference>
<dbReference type="PROSITE" id="PS50086">
    <property type="entry name" value="TBC_RABGAP"/>
    <property type="match status" value="1"/>
</dbReference>
<organism>
    <name type="scientific">Mus musculus</name>
    <name type="common">Mouse</name>
    <dbReference type="NCBI Taxonomy" id="10090"/>
    <lineage>
        <taxon>Eukaryota</taxon>
        <taxon>Metazoa</taxon>
        <taxon>Chordata</taxon>
        <taxon>Craniata</taxon>
        <taxon>Vertebrata</taxon>
        <taxon>Euteleostomi</taxon>
        <taxon>Mammalia</taxon>
        <taxon>Eutheria</taxon>
        <taxon>Euarchontoglires</taxon>
        <taxon>Glires</taxon>
        <taxon>Rodentia</taxon>
        <taxon>Myomorpha</taxon>
        <taxon>Muroidea</taxon>
        <taxon>Muridae</taxon>
        <taxon>Murinae</taxon>
        <taxon>Mus</taxon>
        <taxon>Mus</taxon>
    </lineage>
</organism>
<comment type="function">
    <text evidence="5">May act as a GTPase-activating protein for Rab family protein(s).</text>
</comment>
<comment type="subcellular location">
    <subcellularLocation>
        <location evidence="1">Cell membrane</location>
        <topology evidence="1">Peripheral membrane protein</topology>
    </subcellularLocation>
</comment>
<comment type="sequence caution" evidence="5">
    <conflict type="frameshift">
        <sequence resource="EMBL-CDS" id="AAH79587"/>
    </conflict>
</comment>
<comment type="sequence caution" evidence="5">
    <conflict type="erroneous initiation">
        <sequence resource="EMBL-CDS" id="BAD32357"/>
    </conflict>
</comment>
<name>TBC30_MOUSE</name>
<gene>
    <name type="primary">Tbc1d30</name>
    <name type="synonym">Kiaa0984</name>
</gene>
<reference key="1">
    <citation type="journal article" date="2004" name="DNA Res.">
        <title>Prediction of the coding sequences of mouse homologues of KIAA gene: IV. The complete nucleotide sequences of 500 mouse KIAA-homologous cDNAs identified by screening of terminal sequences of cDNA clones randomly sampled from size-fractionated libraries.</title>
        <authorList>
            <person name="Okazaki N."/>
            <person name="Kikuno R."/>
            <person name="Ohara R."/>
            <person name="Inamoto S."/>
            <person name="Koseki H."/>
            <person name="Hiraoka S."/>
            <person name="Saga Y."/>
            <person name="Seino S."/>
            <person name="Nishimura M."/>
            <person name="Kaisho T."/>
            <person name="Hoshino K."/>
            <person name="Kitamura H."/>
            <person name="Nagase T."/>
            <person name="Ohara O."/>
            <person name="Koga H."/>
        </authorList>
    </citation>
    <scope>NUCLEOTIDE SEQUENCE [LARGE SCALE MRNA]</scope>
    <source>
        <tissue>Brain</tissue>
    </source>
</reference>
<reference key="2">
    <citation type="journal article" date="2005" name="Science">
        <title>The transcriptional landscape of the mammalian genome.</title>
        <authorList>
            <person name="Carninci P."/>
            <person name="Kasukawa T."/>
            <person name="Katayama S."/>
            <person name="Gough J."/>
            <person name="Frith M.C."/>
            <person name="Maeda N."/>
            <person name="Oyama R."/>
            <person name="Ravasi T."/>
            <person name="Lenhard B."/>
            <person name="Wells C."/>
            <person name="Kodzius R."/>
            <person name="Shimokawa K."/>
            <person name="Bajic V.B."/>
            <person name="Brenner S.E."/>
            <person name="Batalov S."/>
            <person name="Forrest A.R."/>
            <person name="Zavolan M."/>
            <person name="Davis M.J."/>
            <person name="Wilming L.G."/>
            <person name="Aidinis V."/>
            <person name="Allen J.E."/>
            <person name="Ambesi-Impiombato A."/>
            <person name="Apweiler R."/>
            <person name="Aturaliya R.N."/>
            <person name="Bailey T.L."/>
            <person name="Bansal M."/>
            <person name="Baxter L."/>
            <person name="Beisel K.W."/>
            <person name="Bersano T."/>
            <person name="Bono H."/>
            <person name="Chalk A.M."/>
            <person name="Chiu K.P."/>
            <person name="Choudhary V."/>
            <person name="Christoffels A."/>
            <person name="Clutterbuck D.R."/>
            <person name="Crowe M.L."/>
            <person name="Dalla E."/>
            <person name="Dalrymple B.P."/>
            <person name="de Bono B."/>
            <person name="Della Gatta G."/>
            <person name="di Bernardo D."/>
            <person name="Down T."/>
            <person name="Engstrom P."/>
            <person name="Fagiolini M."/>
            <person name="Faulkner G."/>
            <person name="Fletcher C.F."/>
            <person name="Fukushima T."/>
            <person name="Furuno M."/>
            <person name="Futaki S."/>
            <person name="Gariboldi M."/>
            <person name="Georgii-Hemming P."/>
            <person name="Gingeras T.R."/>
            <person name="Gojobori T."/>
            <person name="Green R.E."/>
            <person name="Gustincich S."/>
            <person name="Harbers M."/>
            <person name="Hayashi Y."/>
            <person name="Hensch T.K."/>
            <person name="Hirokawa N."/>
            <person name="Hill D."/>
            <person name="Huminiecki L."/>
            <person name="Iacono M."/>
            <person name="Ikeo K."/>
            <person name="Iwama A."/>
            <person name="Ishikawa T."/>
            <person name="Jakt M."/>
            <person name="Kanapin A."/>
            <person name="Katoh M."/>
            <person name="Kawasawa Y."/>
            <person name="Kelso J."/>
            <person name="Kitamura H."/>
            <person name="Kitano H."/>
            <person name="Kollias G."/>
            <person name="Krishnan S.P."/>
            <person name="Kruger A."/>
            <person name="Kummerfeld S.K."/>
            <person name="Kurochkin I.V."/>
            <person name="Lareau L.F."/>
            <person name="Lazarevic D."/>
            <person name="Lipovich L."/>
            <person name="Liu J."/>
            <person name="Liuni S."/>
            <person name="McWilliam S."/>
            <person name="Madan Babu M."/>
            <person name="Madera M."/>
            <person name="Marchionni L."/>
            <person name="Matsuda H."/>
            <person name="Matsuzawa S."/>
            <person name="Miki H."/>
            <person name="Mignone F."/>
            <person name="Miyake S."/>
            <person name="Morris K."/>
            <person name="Mottagui-Tabar S."/>
            <person name="Mulder N."/>
            <person name="Nakano N."/>
            <person name="Nakauchi H."/>
            <person name="Ng P."/>
            <person name="Nilsson R."/>
            <person name="Nishiguchi S."/>
            <person name="Nishikawa S."/>
            <person name="Nori F."/>
            <person name="Ohara O."/>
            <person name="Okazaki Y."/>
            <person name="Orlando V."/>
            <person name="Pang K.C."/>
            <person name="Pavan W.J."/>
            <person name="Pavesi G."/>
            <person name="Pesole G."/>
            <person name="Petrovsky N."/>
            <person name="Piazza S."/>
            <person name="Reed J."/>
            <person name="Reid J.F."/>
            <person name="Ring B.Z."/>
            <person name="Ringwald M."/>
            <person name="Rost B."/>
            <person name="Ruan Y."/>
            <person name="Salzberg S.L."/>
            <person name="Sandelin A."/>
            <person name="Schneider C."/>
            <person name="Schoenbach C."/>
            <person name="Sekiguchi K."/>
            <person name="Semple C.A."/>
            <person name="Seno S."/>
            <person name="Sessa L."/>
            <person name="Sheng Y."/>
            <person name="Shibata Y."/>
            <person name="Shimada H."/>
            <person name="Shimada K."/>
            <person name="Silva D."/>
            <person name="Sinclair B."/>
            <person name="Sperling S."/>
            <person name="Stupka E."/>
            <person name="Sugiura K."/>
            <person name="Sultana R."/>
            <person name="Takenaka Y."/>
            <person name="Taki K."/>
            <person name="Tammoja K."/>
            <person name="Tan S.L."/>
            <person name="Tang S."/>
            <person name="Taylor M.S."/>
            <person name="Tegner J."/>
            <person name="Teichmann S.A."/>
            <person name="Ueda H.R."/>
            <person name="van Nimwegen E."/>
            <person name="Verardo R."/>
            <person name="Wei C.L."/>
            <person name="Yagi K."/>
            <person name="Yamanishi H."/>
            <person name="Zabarovsky E."/>
            <person name="Zhu S."/>
            <person name="Zimmer A."/>
            <person name="Hide W."/>
            <person name="Bult C."/>
            <person name="Grimmond S.M."/>
            <person name="Teasdale R.D."/>
            <person name="Liu E.T."/>
            <person name="Brusic V."/>
            <person name="Quackenbush J."/>
            <person name="Wahlestedt C."/>
            <person name="Mattick J.S."/>
            <person name="Hume D.A."/>
            <person name="Kai C."/>
            <person name="Sasaki D."/>
            <person name="Tomaru Y."/>
            <person name="Fukuda S."/>
            <person name="Kanamori-Katayama M."/>
            <person name="Suzuki M."/>
            <person name="Aoki J."/>
            <person name="Arakawa T."/>
            <person name="Iida J."/>
            <person name="Imamura K."/>
            <person name="Itoh M."/>
            <person name="Kato T."/>
            <person name="Kawaji H."/>
            <person name="Kawagashira N."/>
            <person name="Kawashima T."/>
            <person name="Kojima M."/>
            <person name="Kondo S."/>
            <person name="Konno H."/>
            <person name="Nakano K."/>
            <person name="Ninomiya N."/>
            <person name="Nishio T."/>
            <person name="Okada M."/>
            <person name="Plessy C."/>
            <person name="Shibata K."/>
            <person name="Shiraki T."/>
            <person name="Suzuki S."/>
            <person name="Tagami M."/>
            <person name="Waki K."/>
            <person name="Watahiki A."/>
            <person name="Okamura-Oho Y."/>
            <person name="Suzuki H."/>
            <person name="Kawai J."/>
            <person name="Hayashizaki Y."/>
        </authorList>
    </citation>
    <scope>NUCLEOTIDE SEQUENCE [LARGE SCALE MRNA]</scope>
    <source>
        <strain>C57BL/6J</strain>
        <tissue>Retina</tissue>
    </source>
</reference>
<reference key="3">
    <citation type="journal article" date="2004" name="Genome Res.">
        <title>The status, quality, and expansion of the NIH full-length cDNA project: the Mammalian Gene Collection (MGC).</title>
        <authorList>
            <consortium name="The MGC Project Team"/>
        </authorList>
    </citation>
    <scope>NUCLEOTIDE SEQUENCE [LARGE SCALE MRNA]</scope>
    <source>
        <strain>C57BL/6J</strain>
        <tissue>Brain</tissue>
    </source>
</reference>
<reference key="4">
    <citation type="journal article" date="2010" name="Cell">
        <title>A tissue-specific atlas of mouse protein phosphorylation and expression.</title>
        <authorList>
            <person name="Huttlin E.L."/>
            <person name="Jedrychowski M.P."/>
            <person name="Elias J.E."/>
            <person name="Goswami T."/>
            <person name="Rad R."/>
            <person name="Beausoleil S.A."/>
            <person name="Villen J."/>
            <person name="Haas W."/>
            <person name="Sowa M.E."/>
            <person name="Gygi S.P."/>
        </authorList>
    </citation>
    <scope>PHOSPHORYLATION [LARGE SCALE ANALYSIS] AT SER-642</scope>
    <scope>IDENTIFICATION BY MASS SPECTROMETRY [LARGE SCALE ANALYSIS]</scope>
    <source>
        <tissue>Pancreas</tissue>
    </source>
</reference>
<keyword id="KW-1003">Cell membrane</keyword>
<keyword id="KW-0175">Coiled coil</keyword>
<keyword id="KW-0472">Membrane</keyword>
<keyword id="KW-0597">Phosphoprotein</keyword>
<keyword id="KW-1185">Reference proteome</keyword>
<proteinExistence type="evidence at protein level"/>
<evidence type="ECO:0000250" key="1"/>
<evidence type="ECO:0000255" key="2"/>
<evidence type="ECO:0000255" key="3">
    <source>
        <dbReference type="PROSITE-ProRule" id="PRU00163"/>
    </source>
</evidence>
<evidence type="ECO:0000256" key="4">
    <source>
        <dbReference type="SAM" id="MobiDB-lite"/>
    </source>
</evidence>
<evidence type="ECO:0000305" key="5"/>
<evidence type="ECO:0007744" key="6">
    <source>
    </source>
</evidence>
<sequence>MRQDKLTGSLRRGGRCLKRQGGGGVGTILSNVLKKRSCISRTAPRLLCTLEPGVDTKLKFTLEPSLGQNGFQQWYDALKAVARLSTGIPKEWRRKVWLTLADHYLHSIAIDWDKTMRFTFNERSNPDDDSMGIQIVKDLHRTGCSSYCGQEAEQDRVVLKRVLLAYARWNKNVGYCQGFNILAALILEVMEGNEGDALKIMIYLIDKVLPESYFVNNLRALSVDMAVFRDLLRLKLPELSQHLDTLQRTANKESGGGYEPPLTNVFTMQWFLTLFATCLPNHTVLKIWDSVFFEGSEIILRVSLAIWAKLGEQIECCETADEFYGTMGRLTQEMLEQDLLQSHELMQTVYSMAPFPFPQLAELREKYTYNITPFPATIKPTSVSGRHSKARDSDDENGPDDEDAVASAVGCLGPLSGLLAPELQKYQKQIKEATEEQTLRSNNIAELSPGAINSCRSEYHAAFNSMMMERMTTDINALKRQYSRIKKKQQQQLHQVYIRADKGPVTSILPSQANSSPVINHLLLGKKMKITNRAAKNAVIHVPGHPGGKISPVPYEDIKTKLNSPWRTHIRVHKKNMPRTKSHLGCGDTVGLIEEQSEGCKASSLGAAEEFPSGRTVTAHSEGSSGDGDGGGSTPRTIEGQSPEPVFGDADVDVAAVQVKLEALELNQRDAAAETEPKVHFPCQRHASELADAPGENQTAIKLLPGSTSKTPIFSPFPSVKPLRKSATARNLGLYGPTERTPNVHFPQMSRGFNKSGIGNSSTKKR</sequence>
<feature type="chain" id="PRO_0000320653" description="TBC1 domain family member 30">
    <location>
        <begin position="1"/>
        <end position="766"/>
    </location>
</feature>
<feature type="domain" description="Rab-GAP TBC" evidence="3">
    <location>
        <begin position="87"/>
        <end position="295"/>
    </location>
</feature>
<feature type="region of interest" description="Disordered" evidence="4">
    <location>
        <begin position="380"/>
        <end position="406"/>
    </location>
</feature>
<feature type="region of interest" description="Disordered" evidence="4">
    <location>
        <begin position="603"/>
        <end position="647"/>
    </location>
</feature>
<feature type="region of interest" description="Disordered" evidence="4">
    <location>
        <begin position="731"/>
        <end position="766"/>
    </location>
</feature>
<feature type="coiled-coil region" evidence="2">
    <location>
        <begin position="422"/>
        <end position="491"/>
    </location>
</feature>
<feature type="compositionally biased region" description="Acidic residues" evidence="4">
    <location>
        <begin position="393"/>
        <end position="404"/>
    </location>
</feature>
<feature type="compositionally biased region" description="Polar residues" evidence="4">
    <location>
        <begin position="751"/>
        <end position="766"/>
    </location>
</feature>
<feature type="modified residue" description="Phosphoserine" evidence="6">
    <location>
        <position position="642"/>
    </location>
</feature>
<feature type="sequence conflict" description="In Ref. 1; BAD32357 and 2; BAC31963." evidence="5" ref="1 2">
    <original>S</original>
    <variation>G</variation>
    <location>
        <position position="633"/>
    </location>
</feature>